<accession>B5R6G2</accession>
<sequence>MANITVTFTITEFCLHTGVTEEELNEIVGLGVIEPYEDDNADWQFDDRAASVVQRALRLREELALDWPGIAVALTLLEENSRLREENRLLLQRLSRFISHP</sequence>
<feature type="chain" id="PRO_1000137778" description="Chaperone modulatory protein CbpM">
    <location>
        <begin position="1"/>
        <end position="101"/>
    </location>
</feature>
<protein>
    <recommendedName>
        <fullName evidence="1">Chaperone modulatory protein CbpM</fullName>
    </recommendedName>
</protein>
<evidence type="ECO:0000255" key="1">
    <source>
        <dbReference type="HAMAP-Rule" id="MF_01155"/>
    </source>
</evidence>
<proteinExistence type="inferred from homology"/>
<gene>
    <name evidence="1" type="primary">cbpM</name>
    <name type="ordered locus">SG1000</name>
</gene>
<name>CBPM_SALG2</name>
<reference key="1">
    <citation type="journal article" date="2008" name="Genome Res.">
        <title>Comparative genome analysis of Salmonella enteritidis PT4 and Salmonella gallinarum 287/91 provides insights into evolutionary and host adaptation pathways.</title>
        <authorList>
            <person name="Thomson N.R."/>
            <person name="Clayton D.J."/>
            <person name="Windhorst D."/>
            <person name="Vernikos G."/>
            <person name="Davidson S."/>
            <person name="Churcher C."/>
            <person name="Quail M.A."/>
            <person name="Stevens M."/>
            <person name="Jones M.A."/>
            <person name="Watson M."/>
            <person name="Barron A."/>
            <person name="Layton A."/>
            <person name="Pickard D."/>
            <person name="Kingsley R.A."/>
            <person name="Bignell A."/>
            <person name="Clark L."/>
            <person name="Harris B."/>
            <person name="Ormond D."/>
            <person name="Abdellah Z."/>
            <person name="Brooks K."/>
            <person name="Cherevach I."/>
            <person name="Chillingworth T."/>
            <person name="Woodward J."/>
            <person name="Norberczak H."/>
            <person name="Lord A."/>
            <person name="Arrowsmith C."/>
            <person name="Jagels K."/>
            <person name="Moule S."/>
            <person name="Mungall K."/>
            <person name="Saunders M."/>
            <person name="Whitehead S."/>
            <person name="Chabalgoity J.A."/>
            <person name="Maskell D."/>
            <person name="Humphreys T."/>
            <person name="Roberts M."/>
            <person name="Barrow P.A."/>
            <person name="Dougan G."/>
            <person name="Parkhill J."/>
        </authorList>
    </citation>
    <scope>NUCLEOTIDE SEQUENCE [LARGE SCALE GENOMIC DNA]</scope>
    <source>
        <strain>287/91 / NCTC 13346</strain>
    </source>
</reference>
<dbReference type="EMBL" id="AM933173">
    <property type="protein sequence ID" value="CAR36889.1"/>
    <property type="molecule type" value="Genomic_DNA"/>
</dbReference>
<dbReference type="RefSeq" id="WP_001284251.1">
    <property type="nucleotide sequence ID" value="NC_011274.1"/>
</dbReference>
<dbReference type="SMR" id="B5R6G2"/>
<dbReference type="KEGG" id="seg:SG1000"/>
<dbReference type="HOGENOM" id="CLU_144710_3_1_6"/>
<dbReference type="Proteomes" id="UP000008321">
    <property type="component" value="Chromosome"/>
</dbReference>
<dbReference type="Gene3D" id="1.10.1660.10">
    <property type="match status" value="1"/>
</dbReference>
<dbReference type="HAMAP" id="MF_01155">
    <property type="entry name" value="CbpM"/>
    <property type="match status" value="1"/>
</dbReference>
<dbReference type="InterPro" id="IPR022835">
    <property type="entry name" value="CbpM"/>
</dbReference>
<dbReference type="NCBIfam" id="NF007617">
    <property type="entry name" value="PRK10265.1"/>
    <property type="match status" value="1"/>
</dbReference>
<dbReference type="Pfam" id="PF13591">
    <property type="entry name" value="MerR_2"/>
    <property type="match status" value="1"/>
</dbReference>
<organism>
    <name type="scientific">Salmonella gallinarum (strain 287/91 / NCTC 13346)</name>
    <dbReference type="NCBI Taxonomy" id="550538"/>
    <lineage>
        <taxon>Bacteria</taxon>
        <taxon>Pseudomonadati</taxon>
        <taxon>Pseudomonadota</taxon>
        <taxon>Gammaproteobacteria</taxon>
        <taxon>Enterobacterales</taxon>
        <taxon>Enterobacteriaceae</taxon>
        <taxon>Salmonella</taxon>
    </lineage>
</organism>
<comment type="function">
    <text evidence="1">Interacts with CbpA and inhibits both the DnaJ-like co-chaperone activity and the DNA binding activity of CbpA. Together with CbpA, modulates the activity of the DnaK chaperone system. Does not inhibit the co-chaperone activity of DnaJ.</text>
</comment>
<comment type="similarity">
    <text evidence="1">Belongs to the CbpM family.</text>
</comment>